<accession>B1AID1</accession>
<gene>
    <name type="ordered locus">UPA3_0148</name>
</gene>
<sequence>MLNKNKRWYLIALYDIYQGLLTTKQCEYFNLHYFKDLSFSEIAELKEISKSAISDCLNKVCDQLLKYEQALLIYEKNKKRNDLYTLINDSELVKKLKDI</sequence>
<reference key="1">
    <citation type="submission" date="2008-02" db="EMBL/GenBank/DDBJ databases">
        <title>Genome sequence of Ureaplasma parvum serovar 3.</title>
        <authorList>
            <person name="Methe B.A."/>
            <person name="Glass J."/>
            <person name="Waites K."/>
            <person name="Shrivastava S."/>
        </authorList>
    </citation>
    <scope>NUCLEOTIDE SEQUENCE [LARGE SCALE GENOMIC DNA]</scope>
    <source>
        <strain>ATCC 27815 / 27 / NCTC 11736</strain>
    </source>
</reference>
<feature type="chain" id="PRO_1000078405" description="UPF0122 protein UPA3_0148">
    <location>
        <begin position="1"/>
        <end position="99"/>
    </location>
</feature>
<protein>
    <recommendedName>
        <fullName evidence="1">UPF0122 protein UPA3_0148</fullName>
    </recommendedName>
</protein>
<name>Y148_UREP2</name>
<evidence type="ECO:0000255" key="1">
    <source>
        <dbReference type="HAMAP-Rule" id="MF_00245"/>
    </source>
</evidence>
<dbReference type="EMBL" id="CP000942">
    <property type="protein sequence ID" value="ACA32726.1"/>
    <property type="molecule type" value="Genomic_DNA"/>
</dbReference>
<dbReference type="RefSeq" id="WP_006688941.1">
    <property type="nucleotide sequence ID" value="NC_010503.1"/>
</dbReference>
<dbReference type="SMR" id="B1AID1"/>
<dbReference type="GeneID" id="29672731"/>
<dbReference type="KEGG" id="upa:UPA3_0148"/>
<dbReference type="HOGENOM" id="CLU_129218_1_2_14"/>
<dbReference type="Proteomes" id="UP000002162">
    <property type="component" value="Chromosome"/>
</dbReference>
<dbReference type="Gene3D" id="1.10.10.10">
    <property type="entry name" value="Winged helix-like DNA-binding domain superfamily/Winged helix DNA-binding domain"/>
    <property type="match status" value="1"/>
</dbReference>
<dbReference type="HAMAP" id="MF_00245">
    <property type="entry name" value="UPF0122"/>
    <property type="match status" value="1"/>
</dbReference>
<dbReference type="InterPro" id="IPR013324">
    <property type="entry name" value="RNA_pol_sigma_r3/r4-like"/>
</dbReference>
<dbReference type="InterPro" id="IPR007394">
    <property type="entry name" value="UPF0122"/>
</dbReference>
<dbReference type="InterPro" id="IPR036388">
    <property type="entry name" value="WH-like_DNA-bd_sf"/>
</dbReference>
<dbReference type="NCBIfam" id="NF001073">
    <property type="entry name" value="PRK00118.2-3"/>
    <property type="match status" value="1"/>
</dbReference>
<dbReference type="PANTHER" id="PTHR40083">
    <property type="entry name" value="UPF0122 PROTEIN CBO2450/CLC_2298"/>
    <property type="match status" value="1"/>
</dbReference>
<dbReference type="PANTHER" id="PTHR40083:SF1">
    <property type="entry name" value="UPF0122 PROTEIN YLXM"/>
    <property type="match status" value="1"/>
</dbReference>
<dbReference type="Pfam" id="PF04297">
    <property type="entry name" value="UPF0122"/>
    <property type="match status" value="1"/>
</dbReference>
<dbReference type="SUPFAM" id="SSF88659">
    <property type="entry name" value="Sigma3 and sigma4 domains of RNA polymerase sigma factors"/>
    <property type="match status" value="1"/>
</dbReference>
<proteinExistence type="inferred from homology"/>
<comment type="function">
    <text evidence="1">Might take part in the signal recognition particle (SRP) pathway. This is inferred from the conservation of its genetic proximity to ftsY/ffh. May be a regulatory protein.</text>
</comment>
<comment type="similarity">
    <text evidence="1">Belongs to the UPF0122 family.</text>
</comment>
<organism>
    <name type="scientific">Ureaplasma parvum serovar 3 (strain ATCC 27815 / 27 / NCTC 11736)</name>
    <dbReference type="NCBI Taxonomy" id="505682"/>
    <lineage>
        <taxon>Bacteria</taxon>
        <taxon>Bacillati</taxon>
        <taxon>Mycoplasmatota</taxon>
        <taxon>Mycoplasmoidales</taxon>
        <taxon>Mycoplasmoidaceae</taxon>
        <taxon>Ureaplasma</taxon>
    </lineage>
</organism>